<feature type="chain" id="PRO_0000394246" description="Zinc finger and SCAN domain containing protein 4F">
    <location>
        <begin position="1"/>
        <end position="506"/>
    </location>
</feature>
<feature type="domain" description="SCAN box" evidence="3">
    <location>
        <begin position="37"/>
        <end position="119"/>
    </location>
</feature>
<feature type="zinc finger region" description="C2H2-type 1" evidence="2">
    <location>
        <begin position="395"/>
        <end position="417"/>
    </location>
</feature>
<feature type="zinc finger region" description="C2H2-type 2" evidence="2">
    <location>
        <begin position="424"/>
        <end position="446"/>
    </location>
</feature>
<feature type="zinc finger region" description="C2H2-type 3" evidence="2">
    <location>
        <begin position="452"/>
        <end position="474"/>
    </location>
</feature>
<feature type="zinc finger region" description="C2H2-type 4" evidence="2">
    <location>
        <begin position="480"/>
        <end position="503"/>
    </location>
</feature>
<feature type="region of interest" description="Disordered" evidence="4">
    <location>
        <begin position="1"/>
        <end position="24"/>
    </location>
</feature>
<feature type="sequence conflict" description="In Ref. 1; BAE24616." evidence="6" ref="1">
    <original>E</original>
    <variation>G</variation>
    <location>
        <position position="200"/>
    </location>
</feature>
<dbReference type="EMBL" id="AK141250">
    <property type="protein sequence ID" value="BAE24616.1"/>
    <property type="molecule type" value="mRNA"/>
</dbReference>
<dbReference type="EMBL" id="AC155315">
    <property type="status" value="NOT_ANNOTATED_CDS"/>
    <property type="molecule type" value="Genomic_DNA"/>
</dbReference>
<dbReference type="CCDS" id="CCDS52015.1"/>
<dbReference type="RefSeq" id="NP_001103786.2">
    <property type="nucleotide sequence ID" value="NM_001110316.2"/>
</dbReference>
<dbReference type="SMR" id="Q3URS2"/>
<dbReference type="BioGRID" id="577751">
    <property type="interactions" value="1"/>
</dbReference>
<dbReference type="FunCoup" id="Q3URS2">
    <property type="interactions" value="77"/>
</dbReference>
<dbReference type="IntAct" id="Q3URS2">
    <property type="interactions" value="1"/>
</dbReference>
<dbReference type="STRING" id="10090.ENSMUSP00000120149"/>
<dbReference type="GlyGen" id="Q3URS2">
    <property type="glycosylation" value="2 sites"/>
</dbReference>
<dbReference type="iPTMnet" id="Q3URS2"/>
<dbReference type="PhosphoSitePlus" id="Q3URS2"/>
<dbReference type="PaxDb" id="10090-ENSMUSP00000120149"/>
<dbReference type="PeptideAtlas" id="Q3URS2"/>
<dbReference type="Ensembl" id="ENSMUST00000145237.8">
    <property type="protein sequence ID" value="ENSMUSP00000120149.2"/>
    <property type="gene ID" value="ENSMUSG00000070828.11"/>
</dbReference>
<dbReference type="GeneID" id="665902"/>
<dbReference type="KEGG" id="mmu:665902"/>
<dbReference type="UCSC" id="uc009fdn.1">
    <property type="organism name" value="mouse"/>
</dbReference>
<dbReference type="AGR" id="MGI:3708485"/>
<dbReference type="CTD" id="665902"/>
<dbReference type="MGI" id="MGI:3708485">
    <property type="gene designation" value="Zscan4f"/>
</dbReference>
<dbReference type="VEuPathDB" id="HostDB:ENSMUSG00000070828"/>
<dbReference type="eggNOG" id="KOG1721">
    <property type="taxonomic scope" value="Eukaryota"/>
</dbReference>
<dbReference type="GeneTree" id="ENSGT00390000012244"/>
<dbReference type="HOGENOM" id="CLU_002678_49_10_1"/>
<dbReference type="InParanoid" id="Q3URS2"/>
<dbReference type="OMA" id="HMERECE"/>
<dbReference type="OrthoDB" id="85144at9989"/>
<dbReference type="PhylomeDB" id="Q3URS2"/>
<dbReference type="TreeFam" id="TF337216"/>
<dbReference type="BioGRID-ORCS" id="665902">
    <property type="hits" value="8 hits in 44 CRISPR screens"/>
</dbReference>
<dbReference type="PRO" id="PR:Q3URS2"/>
<dbReference type="Proteomes" id="UP000000589">
    <property type="component" value="Chromosome 7"/>
</dbReference>
<dbReference type="RNAct" id="Q3URS2">
    <property type="molecule type" value="protein"/>
</dbReference>
<dbReference type="Bgee" id="ENSMUSG00000070828">
    <property type="expression patterns" value="Expressed in animal zygote and 4 other cell types or tissues"/>
</dbReference>
<dbReference type="ExpressionAtlas" id="Q3URS2">
    <property type="expression patterns" value="differential"/>
</dbReference>
<dbReference type="GO" id="GO:0000781">
    <property type="term" value="C:chromosome, telomeric region"/>
    <property type="evidence" value="ECO:0000250"/>
    <property type="project" value="UniProtKB"/>
</dbReference>
<dbReference type="GO" id="GO:0005654">
    <property type="term" value="C:nucleoplasm"/>
    <property type="evidence" value="ECO:0000304"/>
    <property type="project" value="Reactome"/>
</dbReference>
<dbReference type="GO" id="GO:0003677">
    <property type="term" value="F:DNA binding"/>
    <property type="evidence" value="ECO:0007669"/>
    <property type="project" value="UniProtKB-KW"/>
</dbReference>
<dbReference type="GO" id="GO:0008270">
    <property type="term" value="F:zinc ion binding"/>
    <property type="evidence" value="ECO:0007669"/>
    <property type="project" value="UniProtKB-KW"/>
</dbReference>
<dbReference type="GO" id="GO:0010833">
    <property type="term" value="P:telomere maintenance via telomere lengthening"/>
    <property type="evidence" value="ECO:0000250"/>
    <property type="project" value="UniProtKB"/>
</dbReference>
<dbReference type="FunFam" id="3.30.160.60:FF:004431">
    <property type="match status" value="1"/>
</dbReference>
<dbReference type="FunFam" id="3.30.160.60:FF:001485">
    <property type="entry name" value="Krueppel-related zinc finger protein"/>
    <property type="match status" value="1"/>
</dbReference>
<dbReference type="FunFam" id="1.10.4020.10:FF:000004">
    <property type="entry name" value="Zinc finger and SCAN domain containing 4"/>
    <property type="match status" value="1"/>
</dbReference>
<dbReference type="FunFam" id="3.30.160.60:FF:001779">
    <property type="entry name" value="Zinc finger and SCAN domain containing 4"/>
    <property type="match status" value="1"/>
</dbReference>
<dbReference type="FunFam" id="3.30.160.60:FF:003083">
    <property type="entry name" value="Zinc finger and SCAN domain containing protein 4F"/>
    <property type="match status" value="1"/>
</dbReference>
<dbReference type="Gene3D" id="3.30.160.60">
    <property type="entry name" value="Classic Zinc Finger"/>
    <property type="match status" value="4"/>
</dbReference>
<dbReference type="Gene3D" id="1.10.4020.10">
    <property type="entry name" value="DNA breaking-rejoining enzymes"/>
    <property type="match status" value="1"/>
</dbReference>
<dbReference type="InterPro" id="IPR003309">
    <property type="entry name" value="SCAN_dom"/>
</dbReference>
<dbReference type="InterPro" id="IPR038269">
    <property type="entry name" value="SCAN_sf"/>
</dbReference>
<dbReference type="InterPro" id="IPR036236">
    <property type="entry name" value="Znf_C2H2_sf"/>
</dbReference>
<dbReference type="InterPro" id="IPR013087">
    <property type="entry name" value="Znf_C2H2_type"/>
</dbReference>
<dbReference type="PANTHER" id="PTHR23226">
    <property type="entry name" value="ZINC FINGER AND SCAN DOMAIN-CONTAINING"/>
    <property type="match status" value="1"/>
</dbReference>
<dbReference type="PANTHER" id="PTHR23226:SF88">
    <property type="entry name" value="ZINC FINGER AND SCAN DOMAIN-CONTAINING PROTEIN 4"/>
    <property type="match status" value="1"/>
</dbReference>
<dbReference type="Pfam" id="PF02023">
    <property type="entry name" value="SCAN"/>
    <property type="match status" value="1"/>
</dbReference>
<dbReference type="Pfam" id="PF00096">
    <property type="entry name" value="zf-C2H2"/>
    <property type="match status" value="3"/>
</dbReference>
<dbReference type="SMART" id="SM00431">
    <property type="entry name" value="SCAN"/>
    <property type="match status" value="1"/>
</dbReference>
<dbReference type="SMART" id="SM00355">
    <property type="entry name" value="ZnF_C2H2"/>
    <property type="match status" value="4"/>
</dbReference>
<dbReference type="SUPFAM" id="SSF57667">
    <property type="entry name" value="beta-beta-alpha zinc fingers"/>
    <property type="match status" value="2"/>
</dbReference>
<dbReference type="SUPFAM" id="SSF47353">
    <property type="entry name" value="Retrovirus capsid dimerization domain-like"/>
    <property type="match status" value="1"/>
</dbReference>
<dbReference type="PROSITE" id="PS50804">
    <property type="entry name" value="SCAN_BOX"/>
    <property type="match status" value="1"/>
</dbReference>
<dbReference type="PROSITE" id="PS00028">
    <property type="entry name" value="ZINC_FINGER_C2H2_1"/>
    <property type="match status" value="4"/>
</dbReference>
<dbReference type="PROSITE" id="PS50157">
    <property type="entry name" value="ZINC_FINGER_C2H2_2"/>
    <property type="match status" value="4"/>
</dbReference>
<gene>
    <name type="primary">Zscan4f</name>
</gene>
<reference key="1">
    <citation type="journal article" date="2005" name="Science">
        <title>The transcriptional landscape of the mammalian genome.</title>
        <authorList>
            <person name="Carninci P."/>
            <person name="Kasukawa T."/>
            <person name="Katayama S."/>
            <person name="Gough J."/>
            <person name="Frith M.C."/>
            <person name="Maeda N."/>
            <person name="Oyama R."/>
            <person name="Ravasi T."/>
            <person name="Lenhard B."/>
            <person name="Wells C."/>
            <person name="Kodzius R."/>
            <person name="Shimokawa K."/>
            <person name="Bajic V.B."/>
            <person name="Brenner S.E."/>
            <person name="Batalov S."/>
            <person name="Forrest A.R."/>
            <person name="Zavolan M."/>
            <person name="Davis M.J."/>
            <person name="Wilming L.G."/>
            <person name="Aidinis V."/>
            <person name="Allen J.E."/>
            <person name="Ambesi-Impiombato A."/>
            <person name="Apweiler R."/>
            <person name="Aturaliya R.N."/>
            <person name="Bailey T.L."/>
            <person name="Bansal M."/>
            <person name="Baxter L."/>
            <person name="Beisel K.W."/>
            <person name="Bersano T."/>
            <person name="Bono H."/>
            <person name="Chalk A.M."/>
            <person name="Chiu K.P."/>
            <person name="Choudhary V."/>
            <person name="Christoffels A."/>
            <person name="Clutterbuck D.R."/>
            <person name="Crowe M.L."/>
            <person name="Dalla E."/>
            <person name="Dalrymple B.P."/>
            <person name="de Bono B."/>
            <person name="Della Gatta G."/>
            <person name="di Bernardo D."/>
            <person name="Down T."/>
            <person name="Engstrom P."/>
            <person name="Fagiolini M."/>
            <person name="Faulkner G."/>
            <person name="Fletcher C.F."/>
            <person name="Fukushima T."/>
            <person name="Furuno M."/>
            <person name="Futaki S."/>
            <person name="Gariboldi M."/>
            <person name="Georgii-Hemming P."/>
            <person name="Gingeras T.R."/>
            <person name="Gojobori T."/>
            <person name="Green R.E."/>
            <person name="Gustincich S."/>
            <person name="Harbers M."/>
            <person name="Hayashi Y."/>
            <person name="Hensch T.K."/>
            <person name="Hirokawa N."/>
            <person name="Hill D."/>
            <person name="Huminiecki L."/>
            <person name="Iacono M."/>
            <person name="Ikeo K."/>
            <person name="Iwama A."/>
            <person name="Ishikawa T."/>
            <person name="Jakt M."/>
            <person name="Kanapin A."/>
            <person name="Katoh M."/>
            <person name="Kawasawa Y."/>
            <person name="Kelso J."/>
            <person name="Kitamura H."/>
            <person name="Kitano H."/>
            <person name="Kollias G."/>
            <person name="Krishnan S.P."/>
            <person name="Kruger A."/>
            <person name="Kummerfeld S.K."/>
            <person name="Kurochkin I.V."/>
            <person name="Lareau L.F."/>
            <person name="Lazarevic D."/>
            <person name="Lipovich L."/>
            <person name="Liu J."/>
            <person name="Liuni S."/>
            <person name="McWilliam S."/>
            <person name="Madan Babu M."/>
            <person name="Madera M."/>
            <person name="Marchionni L."/>
            <person name="Matsuda H."/>
            <person name="Matsuzawa S."/>
            <person name="Miki H."/>
            <person name="Mignone F."/>
            <person name="Miyake S."/>
            <person name="Morris K."/>
            <person name="Mottagui-Tabar S."/>
            <person name="Mulder N."/>
            <person name="Nakano N."/>
            <person name="Nakauchi H."/>
            <person name="Ng P."/>
            <person name="Nilsson R."/>
            <person name="Nishiguchi S."/>
            <person name="Nishikawa S."/>
            <person name="Nori F."/>
            <person name="Ohara O."/>
            <person name="Okazaki Y."/>
            <person name="Orlando V."/>
            <person name="Pang K.C."/>
            <person name="Pavan W.J."/>
            <person name="Pavesi G."/>
            <person name="Pesole G."/>
            <person name="Petrovsky N."/>
            <person name="Piazza S."/>
            <person name="Reed J."/>
            <person name="Reid J.F."/>
            <person name="Ring B.Z."/>
            <person name="Ringwald M."/>
            <person name="Rost B."/>
            <person name="Ruan Y."/>
            <person name="Salzberg S.L."/>
            <person name="Sandelin A."/>
            <person name="Schneider C."/>
            <person name="Schoenbach C."/>
            <person name="Sekiguchi K."/>
            <person name="Semple C.A."/>
            <person name="Seno S."/>
            <person name="Sessa L."/>
            <person name="Sheng Y."/>
            <person name="Shibata Y."/>
            <person name="Shimada H."/>
            <person name="Shimada K."/>
            <person name="Silva D."/>
            <person name="Sinclair B."/>
            <person name="Sperling S."/>
            <person name="Stupka E."/>
            <person name="Sugiura K."/>
            <person name="Sultana R."/>
            <person name="Takenaka Y."/>
            <person name="Taki K."/>
            <person name="Tammoja K."/>
            <person name="Tan S.L."/>
            <person name="Tang S."/>
            <person name="Taylor M.S."/>
            <person name="Tegner J."/>
            <person name="Teichmann S.A."/>
            <person name="Ueda H.R."/>
            <person name="van Nimwegen E."/>
            <person name="Verardo R."/>
            <person name="Wei C.L."/>
            <person name="Yagi K."/>
            <person name="Yamanishi H."/>
            <person name="Zabarovsky E."/>
            <person name="Zhu S."/>
            <person name="Zimmer A."/>
            <person name="Hide W."/>
            <person name="Bult C."/>
            <person name="Grimmond S.M."/>
            <person name="Teasdale R.D."/>
            <person name="Liu E.T."/>
            <person name="Brusic V."/>
            <person name="Quackenbush J."/>
            <person name="Wahlestedt C."/>
            <person name="Mattick J.S."/>
            <person name="Hume D.A."/>
            <person name="Kai C."/>
            <person name="Sasaki D."/>
            <person name="Tomaru Y."/>
            <person name="Fukuda S."/>
            <person name="Kanamori-Katayama M."/>
            <person name="Suzuki M."/>
            <person name="Aoki J."/>
            <person name="Arakawa T."/>
            <person name="Iida J."/>
            <person name="Imamura K."/>
            <person name="Itoh M."/>
            <person name="Kato T."/>
            <person name="Kawaji H."/>
            <person name="Kawagashira N."/>
            <person name="Kawashima T."/>
            <person name="Kojima M."/>
            <person name="Kondo S."/>
            <person name="Konno H."/>
            <person name="Nakano K."/>
            <person name="Ninomiya N."/>
            <person name="Nishio T."/>
            <person name="Okada M."/>
            <person name="Plessy C."/>
            <person name="Shibata K."/>
            <person name="Shiraki T."/>
            <person name="Suzuki S."/>
            <person name="Tagami M."/>
            <person name="Waki K."/>
            <person name="Watahiki A."/>
            <person name="Okamura-Oho Y."/>
            <person name="Suzuki H."/>
            <person name="Kawai J."/>
            <person name="Hayashizaki Y."/>
        </authorList>
    </citation>
    <scope>NUCLEOTIDE SEQUENCE [LARGE SCALE MRNA]</scope>
    <source>
        <strain>C57BL/6J</strain>
    </source>
</reference>
<reference key="2">
    <citation type="journal article" date="2007" name="Dev. Biol.">
        <title>Zscan4: a novel gene expressed exclusively in late 2-cell embryos and embryonic stem cells.</title>
        <authorList>
            <person name="Falco G."/>
            <person name="Lee S.L."/>
            <person name="Stanghellini I."/>
            <person name="Bassey U.C."/>
            <person name="Hamatani T."/>
            <person name="Ko M.S."/>
        </authorList>
    </citation>
    <scope>TISSUE SPECIFICITY</scope>
</reference>
<comment type="function">
    <text evidence="1">Transcription factor required to regulate early development. Binds telomeres and plays a key role in genomic stability by regulating telomere elongation. Acts as an activator of spontaneous telomere sister chromatid exchange (T-SCE) and telomere elongation (By similarity).</text>
</comment>
<comment type="subcellular location">
    <subcellularLocation>
        <location evidence="3">Nucleus</location>
    </subcellularLocation>
    <subcellularLocation>
        <location evidence="1">Chromosome</location>
        <location evidence="1">Telomere</location>
    </subcellularLocation>
</comment>
<comment type="tissue specificity">
    <text evidence="5">Up-regulated in blastocyst outgrowths and is detectable in a mosaic fashion in ES cultures.</text>
</comment>
<accession>Q3URS2</accession>
<name>ZSC4F_MOUSE</name>
<proteinExistence type="evidence at transcript level"/>
<organism>
    <name type="scientific">Mus musculus</name>
    <name type="common">Mouse</name>
    <dbReference type="NCBI Taxonomy" id="10090"/>
    <lineage>
        <taxon>Eukaryota</taxon>
        <taxon>Metazoa</taxon>
        <taxon>Chordata</taxon>
        <taxon>Craniata</taxon>
        <taxon>Vertebrata</taxon>
        <taxon>Euteleostomi</taxon>
        <taxon>Mammalia</taxon>
        <taxon>Eutheria</taxon>
        <taxon>Euarchontoglires</taxon>
        <taxon>Glires</taxon>
        <taxon>Rodentia</taxon>
        <taxon>Myomorpha</taxon>
        <taxon>Muroidea</taxon>
        <taxon>Muridae</taxon>
        <taxon>Murinae</taxon>
        <taxon>Mus</taxon>
        <taxon>Mus</taxon>
    </lineage>
</organism>
<evidence type="ECO:0000250" key="1"/>
<evidence type="ECO:0000255" key="2">
    <source>
        <dbReference type="PROSITE-ProRule" id="PRU00042"/>
    </source>
</evidence>
<evidence type="ECO:0000255" key="3">
    <source>
        <dbReference type="PROSITE-ProRule" id="PRU00187"/>
    </source>
</evidence>
<evidence type="ECO:0000256" key="4">
    <source>
        <dbReference type="SAM" id="MobiDB-lite"/>
    </source>
</evidence>
<evidence type="ECO:0000269" key="5">
    <source>
    </source>
</evidence>
<evidence type="ECO:0000305" key="6"/>
<protein>
    <recommendedName>
        <fullName>Zinc finger and SCAN domain containing protein 4F</fullName>
    </recommendedName>
</protein>
<sequence>MASQQAPAKDLQTNNLEFTPTDSSGVQWAEDISNSPSAQLNFSPSNNGCWATQELQSLWKMFNSWLQPEKQTKEQMISQLVLEQFLLTGHCKDKYALTEKWKASGSDMRRFMESLTDECLKPPVMVHVSMQGQEALFSENMPLKEVIKLLKQQQSATRPTPDNEQMPVDTTQDRLLATGQENSENECNNSCNATEANVGESCSGNEMDSLLIMQKEQHPEHEEGNVVCQFPHGARRASQGTPSHHVDFPSAPTTADVPMEEQPKDLSRENISEDKNNCYNTSRNAATQVYSGDNIPRNKSDSLFINKRIYHPEPEVGDIPYGVPQDSTRASQGTSTCLQESLGECFSEKDPREVPGLQSRQEQLISDPVLLGKNHEANLPCESHQKRFCRDAKLYKCEECSRMFKHARSLSSHQRTHLNKKSELLCVTCQKMFKRVSDRRTHEIIHMPEKPFKCSTCEKSFSHKTNLKSHEMIHTGEMPYVCSLCSRRFRQSSTYHRHLRNYHRSD</sequence>
<keyword id="KW-0158">Chromosome</keyword>
<keyword id="KW-0238">DNA-binding</keyword>
<keyword id="KW-0479">Metal-binding</keyword>
<keyword id="KW-0539">Nucleus</keyword>
<keyword id="KW-1185">Reference proteome</keyword>
<keyword id="KW-0677">Repeat</keyword>
<keyword id="KW-0779">Telomere</keyword>
<keyword id="KW-0804">Transcription</keyword>
<keyword id="KW-0805">Transcription regulation</keyword>
<keyword id="KW-0862">Zinc</keyword>
<keyword id="KW-0863">Zinc-finger</keyword>